<protein>
    <recommendedName>
        <fullName evidence="1">Proline--tRNA ligase</fullName>
        <ecNumber evidence="1">6.1.1.15</ecNumber>
    </recommendedName>
    <alternativeName>
        <fullName evidence="1">Prolyl-tRNA synthetase</fullName>
        <shortName evidence="1">ProRS</shortName>
    </alternativeName>
</protein>
<proteinExistence type="inferred from homology"/>
<reference key="1">
    <citation type="journal article" date="2009" name="PLoS ONE">
        <title>Non mycobacterial virulence genes in the genome of the emerging pathogen Mycobacterium abscessus.</title>
        <authorList>
            <person name="Ripoll F."/>
            <person name="Pasek S."/>
            <person name="Schenowitz C."/>
            <person name="Dossat C."/>
            <person name="Barbe V."/>
            <person name="Rottman M."/>
            <person name="Macheras E."/>
            <person name="Heym B."/>
            <person name="Herrmann J.L."/>
            <person name="Daffe M."/>
            <person name="Brosch R."/>
            <person name="Risler J.L."/>
            <person name="Gaillard J.L."/>
        </authorList>
    </citation>
    <scope>NUCLEOTIDE SEQUENCE [LARGE SCALE GENOMIC DNA]</scope>
    <source>
        <strain>ATCC 19977 / DSM 44196 / CCUG 20993 / CIP 104536 / JCM 13569 / NCTC 13031 / TMC 1543 / L948</strain>
    </source>
</reference>
<feature type="chain" id="PRO_1000199406" description="Proline--tRNA ligase">
    <location>
        <begin position="1"/>
        <end position="580"/>
    </location>
</feature>
<organism>
    <name type="scientific">Mycobacteroides abscessus (strain ATCC 19977 / DSM 44196 / CCUG 20993 / CIP 104536 / JCM 13569 / NCTC 13031 / TMC 1543 / L948)</name>
    <name type="common">Mycobacterium abscessus</name>
    <dbReference type="NCBI Taxonomy" id="561007"/>
    <lineage>
        <taxon>Bacteria</taxon>
        <taxon>Bacillati</taxon>
        <taxon>Actinomycetota</taxon>
        <taxon>Actinomycetes</taxon>
        <taxon>Mycobacteriales</taxon>
        <taxon>Mycobacteriaceae</taxon>
        <taxon>Mycobacteroides</taxon>
        <taxon>Mycobacteroides abscessus</taxon>
    </lineage>
</organism>
<dbReference type="EC" id="6.1.1.15" evidence="1"/>
<dbReference type="EMBL" id="CU458896">
    <property type="protein sequence ID" value="CAM63217.1"/>
    <property type="molecule type" value="Genomic_DNA"/>
</dbReference>
<dbReference type="RefSeq" id="WP_005081714.1">
    <property type="nucleotide sequence ID" value="NZ_MLCG01000003.1"/>
</dbReference>
<dbReference type="SMR" id="B1MD96"/>
<dbReference type="GeneID" id="93380072"/>
<dbReference type="KEGG" id="mab:MAB_3140c"/>
<dbReference type="Proteomes" id="UP000007137">
    <property type="component" value="Chromosome"/>
</dbReference>
<dbReference type="GO" id="GO:0005829">
    <property type="term" value="C:cytosol"/>
    <property type="evidence" value="ECO:0007669"/>
    <property type="project" value="TreeGrafter"/>
</dbReference>
<dbReference type="GO" id="GO:0002161">
    <property type="term" value="F:aminoacyl-tRNA deacylase activity"/>
    <property type="evidence" value="ECO:0007669"/>
    <property type="project" value="InterPro"/>
</dbReference>
<dbReference type="GO" id="GO:0005524">
    <property type="term" value="F:ATP binding"/>
    <property type="evidence" value="ECO:0007669"/>
    <property type="project" value="UniProtKB-UniRule"/>
</dbReference>
<dbReference type="GO" id="GO:0004827">
    <property type="term" value="F:proline-tRNA ligase activity"/>
    <property type="evidence" value="ECO:0007669"/>
    <property type="project" value="UniProtKB-UniRule"/>
</dbReference>
<dbReference type="GO" id="GO:0006433">
    <property type="term" value="P:prolyl-tRNA aminoacylation"/>
    <property type="evidence" value="ECO:0007669"/>
    <property type="project" value="UniProtKB-UniRule"/>
</dbReference>
<dbReference type="CDD" id="cd00861">
    <property type="entry name" value="ProRS_anticodon_short"/>
    <property type="match status" value="1"/>
</dbReference>
<dbReference type="CDD" id="cd00779">
    <property type="entry name" value="ProRS_core_prok"/>
    <property type="match status" value="1"/>
</dbReference>
<dbReference type="FunFam" id="3.30.930.10:FF:000065">
    <property type="entry name" value="Proline--tRNA ligase"/>
    <property type="match status" value="1"/>
</dbReference>
<dbReference type="FunFam" id="3.30.930.10:FF:000070">
    <property type="entry name" value="Proline--tRNA ligase"/>
    <property type="match status" value="1"/>
</dbReference>
<dbReference type="Gene3D" id="3.40.50.800">
    <property type="entry name" value="Anticodon-binding domain"/>
    <property type="match status" value="1"/>
</dbReference>
<dbReference type="Gene3D" id="3.30.930.10">
    <property type="entry name" value="Bira Bifunctional Protein, Domain 2"/>
    <property type="match status" value="2"/>
</dbReference>
<dbReference type="Gene3D" id="3.90.960.10">
    <property type="entry name" value="YbaK/aminoacyl-tRNA synthetase-associated domain"/>
    <property type="match status" value="1"/>
</dbReference>
<dbReference type="HAMAP" id="MF_01569">
    <property type="entry name" value="Pro_tRNA_synth_type1"/>
    <property type="match status" value="1"/>
</dbReference>
<dbReference type="InterPro" id="IPR002314">
    <property type="entry name" value="aa-tRNA-synt_IIb"/>
</dbReference>
<dbReference type="InterPro" id="IPR006195">
    <property type="entry name" value="aa-tRNA-synth_II"/>
</dbReference>
<dbReference type="InterPro" id="IPR045864">
    <property type="entry name" value="aa-tRNA-synth_II/BPL/LPL"/>
</dbReference>
<dbReference type="InterPro" id="IPR004154">
    <property type="entry name" value="Anticodon-bd"/>
</dbReference>
<dbReference type="InterPro" id="IPR036621">
    <property type="entry name" value="Anticodon-bd_dom_sf"/>
</dbReference>
<dbReference type="InterPro" id="IPR002316">
    <property type="entry name" value="Pro-tRNA-ligase_IIa"/>
</dbReference>
<dbReference type="InterPro" id="IPR004500">
    <property type="entry name" value="Pro-tRNA-synth_IIa_bac-type"/>
</dbReference>
<dbReference type="InterPro" id="IPR023717">
    <property type="entry name" value="Pro-tRNA-Synthase_IIa_type1"/>
</dbReference>
<dbReference type="InterPro" id="IPR050062">
    <property type="entry name" value="Pro-tRNA_synthetase"/>
</dbReference>
<dbReference type="InterPro" id="IPR044140">
    <property type="entry name" value="ProRS_anticodon_short"/>
</dbReference>
<dbReference type="InterPro" id="IPR033730">
    <property type="entry name" value="ProRS_core_prok"/>
</dbReference>
<dbReference type="InterPro" id="IPR036754">
    <property type="entry name" value="YbaK/aa-tRNA-synt-asso_dom_sf"/>
</dbReference>
<dbReference type="InterPro" id="IPR007214">
    <property type="entry name" value="YbaK/aa-tRNA-synth-assoc-dom"/>
</dbReference>
<dbReference type="NCBIfam" id="NF006625">
    <property type="entry name" value="PRK09194.1"/>
    <property type="match status" value="1"/>
</dbReference>
<dbReference type="NCBIfam" id="TIGR00409">
    <property type="entry name" value="proS_fam_II"/>
    <property type="match status" value="1"/>
</dbReference>
<dbReference type="PANTHER" id="PTHR42753">
    <property type="entry name" value="MITOCHONDRIAL RIBOSOME PROTEIN L39/PROLYL-TRNA LIGASE FAMILY MEMBER"/>
    <property type="match status" value="1"/>
</dbReference>
<dbReference type="PANTHER" id="PTHR42753:SF2">
    <property type="entry name" value="PROLINE--TRNA LIGASE"/>
    <property type="match status" value="1"/>
</dbReference>
<dbReference type="Pfam" id="PF03129">
    <property type="entry name" value="HGTP_anticodon"/>
    <property type="match status" value="1"/>
</dbReference>
<dbReference type="Pfam" id="PF00587">
    <property type="entry name" value="tRNA-synt_2b"/>
    <property type="match status" value="1"/>
</dbReference>
<dbReference type="Pfam" id="PF04073">
    <property type="entry name" value="tRNA_edit"/>
    <property type="match status" value="1"/>
</dbReference>
<dbReference type="PRINTS" id="PR01046">
    <property type="entry name" value="TRNASYNTHPRO"/>
</dbReference>
<dbReference type="SUPFAM" id="SSF52954">
    <property type="entry name" value="Class II aaRS ABD-related"/>
    <property type="match status" value="1"/>
</dbReference>
<dbReference type="SUPFAM" id="SSF55681">
    <property type="entry name" value="Class II aaRS and biotin synthetases"/>
    <property type="match status" value="1"/>
</dbReference>
<dbReference type="SUPFAM" id="SSF55826">
    <property type="entry name" value="YbaK/ProRS associated domain"/>
    <property type="match status" value="1"/>
</dbReference>
<dbReference type="PROSITE" id="PS50862">
    <property type="entry name" value="AA_TRNA_LIGASE_II"/>
    <property type="match status" value="1"/>
</dbReference>
<sequence>MITRLSELFVRTLRDDPADAEVPSHKLLIRAGYVRPVAPGVYSWLPLGLRVLRKIENIVREEMNAIGGQEILLPALLPRAPYETTNRWTEYGDSLFRLKDRRDNDMMLGPTHEELFALTVKGEYSSYKDFPVILYQVQTKYRDEARPRAGILRGREFVMKDSYSFDTSDDGLKAAYHAHRDAYQRIFGRLGLDYVIVAATSGAMGGSASEEFLAESPTGEDTFVRCVESGYAANVEAVITPAPPARPIEGLAEAVVHETGDTPTIATLVDWANSAGLGRTVTAADTLKNILLKVRQPGGDWELLAVGVPGDREVDDKRLGAALEPAEYELLGDADFAKYPFLVRGYIGPKALLANGVRYLVDPRVVEGTSWITGADEPGKHVVDLVAGRDFTADGTIEAAEVRDGDPSPDGAGQLVSARGIEIGHIFQLGRKYTDAFTVDVLGENGKPVRLTQGSYGIGVSRLVAVVAEQQHDELGLRWPSAVSPFDVHVVIANKDDAARAGAEELAAELDRLGHEVLLDDRTASPGVKFKDAELLGVPWIVVIGRGWADGTIELRNRFTGETQPIAVTDAVASVTQAIG</sequence>
<keyword id="KW-0030">Aminoacyl-tRNA synthetase</keyword>
<keyword id="KW-0067">ATP-binding</keyword>
<keyword id="KW-0963">Cytoplasm</keyword>
<keyword id="KW-0436">Ligase</keyword>
<keyword id="KW-0547">Nucleotide-binding</keyword>
<keyword id="KW-0648">Protein biosynthesis</keyword>
<keyword id="KW-1185">Reference proteome</keyword>
<name>SYP_MYCA9</name>
<accession>B1MD96</accession>
<comment type="function">
    <text evidence="1">Catalyzes the attachment of proline to tRNA(Pro) in a two-step reaction: proline is first activated by ATP to form Pro-AMP and then transferred to the acceptor end of tRNA(Pro). As ProRS can inadvertently accommodate and process non-cognate amino acids such as alanine and cysteine, to avoid such errors it has two additional distinct editing activities against alanine. One activity is designated as 'pretransfer' editing and involves the tRNA(Pro)-independent hydrolysis of activated Ala-AMP. The other activity is designated 'posttransfer' editing and involves deacylation of mischarged Ala-tRNA(Pro). The misacylated Cys-tRNA(Pro) is not edited by ProRS.</text>
</comment>
<comment type="catalytic activity">
    <reaction evidence="1">
        <text>tRNA(Pro) + L-proline + ATP = L-prolyl-tRNA(Pro) + AMP + diphosphate</text>
        <dbReference type="Rhea" id="RHEA:14305"/>
        <dbReference type="Rhea" id="RHEA-COMP:9700"/>
        <dbReference type="Rhea" id="RHEA-COMP:9702"/>
        <dbReference type="ChEBI" id="CHEBI:30616"/>
        <dbReference type="ChEBI" id="CHEBI:33019"/>
        <dbReference type="ChEBI" id="CHEBI:60039"/>
        <dbReference type="ChEBI" id="CHEBI:78442"/>
        <dbReference type="ChEBI" id="CHEBI:78532"/>
        <dbReference type="ChEBI" id="CHEBI:456215"/>
        <dbReference type="EC" id="6.1.1.15"/>
    </reaction>
</comment>
<comment type="subunit">
    <text evidence="1">Homodimer.</text>
</comment>
<comment type="subcellular location">
    <subcellularLocation>
        <location evidence="1">Cytoplasm</location>
    </subcellularLocation>
</comment>
<comment type="domain">
    <text evidence="1">Consists of three domains: the N-terminal catalytic domain, the editing domain and the C-terminal anticodon-binding domain.</text>
</comment>
<comment type="similarity">
    <text evidence="1">Belongs to the class-II aminoacyl-tRNA synthetase family. ProS type 1 subfamily.</text>
</comment>
<gene>
    <name evidence="1" type="primary">proS</name>
    <name type="ordered locus">MAB_3140c</name>
</gene>
<evidence type="ECO:0000255" key="1">
    <source>
        <dbReference type="HAMAP-Rule" id="MF_01569"/>
    </source>
</evidence>